<reference key="1">
    <citation type="journal article" date="2000" name="Nature">
        <title>Sequence and analysis of chromosome 3 of the plant Arabidopsis thaliana.</title>
        <authorList>
            <person name="Salanoubat M."/>
            <person name="Lemcke K."/>
            <person name="Rieger M."/>
            <person name="Ansorge W."/>
            <person name="Unseld M."/>
            <person name="Fartmann B."/>
            <person name="Valle G."/>
            <person name="Bloecker H."/>
            <person name="Perez-Alonso M."/>
            <person name="Obermaier B."/>
            <person name="Delseny M."/>
            <person name="Boutry M."/>
            <person name="Grivell L.A."/>
            <person name="Mache R."/>
            <person name="Puigdomenech P."/>
            <person name="De Simone V."/>
            <person name="Choisne N."/>
            <person name="Artiguenave F."/>
            <person name="Robert C."/>
            <person name="Brottier P."/>
            <person name="Wincker P."/>
            <person name="Cattolico L."/>
            <person name="Weissenbach J."/>
            <person name="Saurin W."/>
            <person name="Quetier F."/>
            <person name="Schaefer M."/>
            <person name="Mueller-Auer S."/>
            <person name="Gabel C."/>
            <person name="Fuchs M."/>
            <person name="Benes V."/>
            <person name="Wurmbach E."/>
            <person name="Drzonek H."/>
            <person name="Erfle H."/>
            <person name="Jordan N."/>
            <person name="Bangert S."/>
            <person name="Wiedelmann R."/>
            <person name="Kranz H."/>
            <person name="Voss H."/>
            <person name="Holland R."/>
            <person name="Brandt P."/>
            <person name="Nyakatura G."/>
            <person name="Vezzi A."/>
            <person name="D'Angelo M."/>
            <person name="Pallavicini A."/>
            <person name="Toppo S."/>
            <person name="Simionati B."/>
            <person name="Conrad A."/>
            <person name="Hornischer K."/>
            <person name="Kauer G."/>
            <person name="Loehnert T.-H."/>
            <person name="Nordsiek G."/>
            <person name="Reichelt J."/>
            <person name="Scharfe M."/>
            <person name="Schoen O."/>
            <person name="Bargues M."/>
            <person name="Terol J."/>
            <person name="Climent J."/>
            <person name="Navarro P."/>
            <person name="Collado C."/>
            <person name="Perez-Perez A."/>
            <person name="Ottenwaelder B."/>
            <person name="Duchemin D."/>
            <person name="Cooke R."/>
            <person name="Laudie M."/>
            <person name="Berger-Llauro C."/>
            <person name="Purnelle B."/>
            <person name="Masuy D."/>
            <person name="de Haan M."/>
            <person name="Maarse A.C."/>
            <person name="Alcaraz J.-P."/>
            <person name="Cottet A."/>
            <person name="Casacuberta E."/>
            <person name="Monfort A."/>
            <person name="Argiriou A."/>
            <person name="Flores M."/>
            <person name="Liguori R."/>
            <person name="Vitale D."/>
            <person name="Mannhaupt G."/>
            <person name="Haase D."/>
            <person name="Schoof H."/>
            <person name="Rudd S."/>
            <person name="Zaccaria P."/>
            <person name="Mewes H.-W."/>
            <person name="Mayer K.F.X."/>
            <person name="Kaul S."/>
            <person name="Town C.D."/>
            <person name="Koo H.L."/>
            <person name="Tallon L.J."/>
            <person name="Jenkins J."/>
            <person name="Rooney T."/>
            <person name="Rizzo M."/>
            <person name="Walts A."/>
            <person name="Utterback T."/>
            <person name="Fujii C.Y."/>
            <person name="Shea T.P."/>
            <person name="Creasy T.H."/>
            <person name="Haas B."/>
            <person name="Maiti R."/>
            <person name="Wu D."/>
            <person name="Peterson J."/>
            <person name="Van Aken S."/>
            <person name="Pai G."/>
            <person name="Militscher J."/>
            <person name="Sellers P."/>
            <person name="Gill J.E."/>
            <person name="Feldblyum T.V."/>
            <person name="Preuss D."/>
            <person name="Lin X."/>
            <person name="Nierman W.C."/>
            <person name="Salzberg S.L."/>
            <person name="White O."/>
            <person name="Venter J.C."/>
            <person name="Fraser C.M."/>
            <person name="Kaneko T."/>
            <person name="Nakamura Y."/>
            <person name="Sato S."/>
            <person name="Kato T."/>
            <person name="Asamizu E."/>
            <person name="Sasamoto S."/>
            <person name="Kimura T."/>
            <person name="Idesawa K."/>
            <person name="Kawashima K."/>
            <person name="Kishida Y."/>
            <person name="Kiyokawa C."/>
            <person name="Kohara M."/>
            <person name="Matsumoto M."/>
            <person name="Matsuno A."/>
            <person name="Muraki A."/>
            <person name="Nakayama S."/>
            <person name="Nakazaki N."/>
            <person name="Shinpo S."/>
            <person name="Takeuchi C."/>
            <person name="Wada T."/>
            <person name="Watanabe A."/>
            <person name="Yamada M."/>
            <person name="Yasuda M."/>
            <person name="Tabata S."/>
        </authorList>
    </citation>
    <scope>NUCLEOTIDE SEQUENCE [LARGE SCALE GENOMIC DNA]</scope>
    <source>
        <strain>cv. Columbia</strain>
    </source>
</reference>
<reference key="2">
    <citation type="journal article" date="2017" name="Plant J.">
        <title>Araport11: a complete reannotation of the Arabidopsis thaliana reference genome.</title>
        <authorList>
            <person name="Cheng C.Y."/>
            <person name="Krishnakumar V."/>
            <person name="Chan A.P."/>
            <person name="Thibaud-Nissen F."/>
            <person name="Schobel S."/>
            <person name="Town C.D."/>
        </authorList>
    </citation>
    <scope>GENOME REANNOTATION</scope>
    <source>
        <strain>cv. Columbia</strain>
    </source>
</reference>
<reference key="3">
    <citation type="journal article" date="2003" name="Science">
        <title>Empirical analysis of transcriptional activity in the Arabidopsis genome.</title>
        <authorList>
            <person name="Yamada K."/>
            <person name="Lim J."/>
            <person name="Dale J.M."/>
            <person name="Chen H."/>
            <person name="Shinn P."/>
            <person name="Palm C.J."/>
            <person name="Southwick A.M."/>
            <person name="Wu H.C."/>
            <person name="Kim C.J."/>
            <person name="Nguyen M."/>
            <person name="Pham P.K."/>
            <person name="Cheuk R.F."/>
            <person name="Karlin-Newmann G."/>
            <person name="Liu S.X."/>
            <person name="Lam B."/>
            <person name="Sakano H."/>
            <person name="Wu T."/>
            <person name="Yu G."/>
            <person name="Miranda M."/>
            <person name="Quach H.L."/>
            <person name="Tripp M."/>
            <person name="Chang C.H."/>
            <person name="Lee J.M."/>
            <person name="Toriumi M.J."/>
            <person name="Chan M.M."/>
            <person name="Tang C.C."/>
            <person name="Onodera C.S."/>
            <person name="Deng J.M."/>
            <person name="Akiyama K."/>
            <person name="Ansari Y."/>
            <person name="Arakawa T."/>
            <person name="Banh J."/>
            <person name="Banno F."/>
            <person name="Bowser L."/>
            <person name="Brooks S.Y."/>
            <person name="Carninci P."/>
            <person name="Chao Q."/>
            <person name="Choy N."/>
            <person name="Enju A."/>
            <person name="Goldsmith A.D."/>
            <person name="Gurjal M."/>
            <person name="Hansen N.F."/>
            <person name="Hayashizaki Y."/>
            <person name="Johnson-Hopson C."/>
            <person name="Hsuan V.W."/>
            <person name="Iida K."/>
            <person name="Karnes M."/>
            <person name="Khan S."/>
            <person name="Koesema E."/>
            <person name="Ishida J."/>
            <person name="Jiang P.X."/>
            <person name="Jones T."/>
            <person name="Kawai J."/>
            <person name="Kamiya A."/>
            <person name="Meyers C."/>
            <person name="Nakajima M."/>
            <person name="Narusaka M."/>
            <person name="Seki M."/>
            <person name="Sakurai T."/>
            <person name="Satou M."/>
            <person name="Tamse R."/>
            <person name="Vaysberg M."/>
            <person name="Wallender E.K."/>
            <person name="Wong C."/>
            <person name="Yamamura Y."/>
            <person name="Yuan S."/>
            <person name="Shinozaki K."/>
            <person name="Davis R.W."/>
            <person name="Theologis A."/>
            <person name="Ecker J.R."/>
        </authorList>
    </citation>
    <scope>NUCLEOTIDE SEQUENCE [LARGE SCALE MRNA]</scope>
    <source>
        <strain>cv. Columbia</strain>
    </source>
</reference>
<reference key="4">
    <citation type="journal article" date="2002" name="Nucleic Acids Res.">
        <title>Analysis of histone acetyltransferase and histone deacetylase families of Arabidopsis thaliana suggests functional diversification of chromatin modification among multicellular eukaryotes.</title>
        <authorList>
            <person name="Pandey R."/>
            <person name="Mueller A."/>
            <person name="Napoli C.A."/>
            <person name="Selinger D.A."/>
            <person name="Pikaard C.S."/>
            <person name="Richards E.J."/>
            <person name="Bender J."/>
            <person name="Mount D.W."/>
            <person name="Jorgensen R.A."/>
        </authorList>
    </citation>
    <scope>GENE FAMILY</scope>
    <scope>NOMENCLATURE</scope>
</reference>
<reference key="5">
    <citation type="journal article" date="2012" name="J. Biol. Chem.">
        <title>The AT-hook motif-containing protein AHL22 regulates flowering initiation by modifying FLOWERING LOCUS T chromatin in Arabidopsis.</title>
        <authorList>
            <person name="Yun J."/>
            <person name="Kim Y.S."/>
            <person name="Jung J.H."/>
            <person name="Seo P.J."/>
            <person name="Park C.M."/>
        </authorList>
    </citation>
    <scope>INTERACTION WITH AHL22</scope>
    <source>
        <strain>cv. Columbia</strain>
    </source>
</reference>
<reference key="6">
    <citation type="journal article" date="2017" name="Genetics">
        <title>Remarkable evolutionary conservation of antiobesity ADIPOSE/WDTC1 homologs in animals and plants.</title>
        <authorList>
            <person name="Ducos E."/>
            <person name="Verges V."/>
            <person name="Duge de Bernonville T."/>
            <person name="Blanc N."/>
            <person name="Giglioli-Guivarc'h N."/>
            <person name="Dutilleul C."/>
        </authorList>
    </citation>
    <scope>INTERACTION WITH ASG2</scope>
    <scope>SUBCELLULAR LOCATION</scope>
    <source>
        <strain>cv. Columbia</strain>
    </source>
</reference>
<dbReference type="EC" id="3.5.1.98"/>
<dbReference type="EMBL" id="AL138652">
    <property type="protein sequence ID" value="CAB72470.1"/>
    <property type="status" value="ALT_SEQ"/>
    <property type="molecule type" value="Genomic_DNA"/>
</dbReference>
<dbReference type="EMBL" id="CP002686">
    <property type="protein sequence ID" value="AEE77930.1"/>
    <property type="molecule type" value="Genomic_DNA"/>
</dbReference>
<dbReference type="EMBL" id="BT002003">
    <property type="protein sequence ID" value="AAN72014.1"/>
    <property type="molecule type" value="mRNA"/>
</dbReference>
<dbReference type="EMBL" id="BT006576">
    <property type="protein sequence ID" value="AAP31920.1"/>
    <property type="molecule type" value="mRNA"/>
</dbReference>
<dbReference type="PIR" id="T47443">
    <property type="entry name" value="T47443"/>
</dbReference>
<dbReference type="RefSeq" id="NP_190054.2">
    <property type="nucleotide sequence ID" value="NM_114336.4"/>
</dbReference>
<dbReference type="SMR" id="Q8H0W2"/>
<dbReference type="BioGRID" id="8914">
    <property type="interactions" value="5"/>
</dbReference>
<dbReference type="FunCoup" id="Q8H0W2">
    <property type="interactions" value="770"/>
</dbReference>
<dbReference type="STRING" id="3702.Q8H0W2"/>
<dbReference type="iPTMnet" id="Q8H0W2"/>
<dbReference type="PaxDb" id="3702-AT3G44680.1"/>
<dbReference type="ProteomicsDB" id="247170"/>
<dbReference type="EnsemblPlants" id="AT3G44680.1">
    <property type="protein sequence ID" value="AT3G44680.1"/>
    <property type="gene ID" value="AT3G44680"/>
</dbReference>
<dbReference type="GeneID" id="823594"/>
<dbReference type="Gramene" id="AT3G44680.1">
    <property type="protein sequence ID" value="AT3G44680.1"/>
    <property type="gene ID" value="AT3G44680"/>
</dbReference>
<dbReference type="KEGG" id="ath:AT3G44680"/>
<dbReference type="Araport" id="AT3G44680"/>
<dbReference type="TAIR" id="AT3G44680">
    <property type="gene designation" value="HDA9"/>
</dbReference>
<dbReference type="eggNOG" id="KOG1342">
    <property type="taxonomic scope" value="Eukaryota"/>
</dbReference>
<dbReference type="HOGENOM" id="CLU_007727_7_4_1"/>
<dbReference type="InParanoid" id="Q8H0W2"/>
<dbReference type="OMA" id="GWLRAFH"/>
<dbReference type="PhylomeDB" id="Q8H0W2"/>
<dbReference type="BRENDA" id="3.5.1.98">
    <property type="organism ID" value="399"/>
</dbReference>
<dbReference type="PRO" id="PR:Q8H0W2"/>
<dbReference type="Proteomes" id="UP000006548">
    <property type="component" value="Chromosome 3"/>
</dbReference>
<dbReference type="ExpressionAtlas" id="Q8H0W2">
    <property type="expression patterns" value="baseline and differential"/>
</dbReference>
<dbReference type="GO" id="GO:0005737">
    <property type="term" value="C:cytoplasm"/>
    <property type="evidence" value="ECO:0000314"/>
    <property type="project" value="TAIR"/>
</dbReference>
<dbReference type="GO" id="GO:0005829">
    <property type="term" value="C:cytosol"/>
    <property type="evidence" value="ECO:0000314"/>
    <property type="project" value="UniProtKB"/>
</dbReference>
<dbReference type="GO" id="GO:0005634">
    <property type="term" value="C:nucleus"/>
    <property type="evidence" value="ECO:0000314"/>
    <property type="project" value="TAIR"/>
</dbReference>
<dbReference type="GO" id="GO:0141221">
    <property type="term" value="F:histone deacetylase activity, hydrolytic mechanism"/>
    <property type="evidence" value="ECO:0007669"/>
    <property type="project" value="UniProtKB-EC"/>
</dbReference>
<dbReference type="GO" id="GO:0043565">
    <property type="term" value="F:sequence-specific DNA binding"/>
    <property type="evidence" value="ECO:0000314"/>
    <property type="project" value="TAIR"/>
</dbReference>
<dbReference type="GO" id="GO:0008270">
    <property type="term" value="F:zinc ion binding"/>
    <property type="evidence" value="ECO:0000250"/>
    <property type="project" value="UniProtKB"/>
</dbReference>
<dbReference type="GO" id="GO:0006325">
    <property type="term" value="P:chromatin organization"/>
    <property type="evidence" value="ECO:0007669"/>
    <property type="project" value="UniProtKB-KW"/>
</dbReference>
<dbReference type="GO" id="GO:0010187">
    <property type="term" value="P:negative regulation of seed germination"/>
    <property type="evidence" value="ECO:0000315"/>
    <property type="project" value="TAIR"/>
</dbReference>
<dbReference type="GO" id="GO:1900055">
    <property type="term" value="P:regulation of leaf senescence"/>
    <property type="evidence" value="ECO:0000315"/>
    <property type="project" value="TAIR"/>
</dbReference>
<dbReference type="FunFam" id="3.40.800.20:FF:000008">
    <property type="entry name" value="Histone deacetylase"/>
    <property type="match status" value="1"/>
</dbReference>
<dbReference type="Gene3D" id="3.40.800.20">
    <property type="entry name" value="Histone deacetylase domain"/>
    <property type="match status" value="1"/>
</dbReference>
<dbReference type="InterPro" id="IPR050284">
    <property type="entry name" value="HDAC_PDAC"/>
</dbReference>
<dbReference type="InterPro" id="IPR000286">
    <property type="entry name" value="His_deacetylse"/>
</dbReference>
<dbReference type="InterPro" id="IPR003084">
    <property type="entry name" value="His_deacetylse_1"/>
</dbReference>
<dbReference type="InterPro" id="IPR023801">
    <property type="entry name" value="His_deacetylse_dom"/>
</dbReference>
<dbReference type="InterPro" id="IPR037138">
    <property type="entry name" value="His_deacetylse_dom_sf"/>
</dbReference>
<dbReference type="InterPro" id="IPR023696">
    <property type="entry name" value="Ureohydrolase_dom_sf"/>
</dbReference>
<dbReference type="PANTHER" id="PTHR10625:SF39">
    <property type="entry name" value="HISTONE DEACETYLASE 9"/>
    <property type="match status" value="1"/>
</dbReference>
<dbReference type="PANTHER" id="PTHR10625">
    <property type="entry name" value="HISTONE DEACETYLASE HDAC1-RELATED"/>
    <property type="match status" value="1"/>
</dbReference>
<dbReference type="Pfam" id="PF00850">
    <property type="entry name" value="Hist_deacetyl"/>
    <property type="match status" value="1"/>
</dbReference>
<dbReference type="PIRSF" id="PIRSF037913">
    <property type="entry name" value="His_deacetylse_1"/>
    <property type="match status" value="1"/>
</dbReference>
<dbReference type="PRINTS" id="PR01270">
    <property type="entry name" value="HDASUPER"/>
</dbReference>
<dbReference type="PRINTS" id="PR01271">
    <property type="entry name" value="HISDACETLASE"/>
</dbReference>
<dbReference type="SUPFAM" id="SSF52768">
    <property type="entry name" value="Arginase/deacetylase"/>
    <property type="match status" value="1"/>
</dbReference>
<protein>
    <recommendedName>
        <fullName>Histone deacetylase 9</fullName>
        <shortName evidence="7">AtHDAC9</shortName>
        <ecNumber>3.5.1.98</ecNumber>
    </recommendedName>
</protein>
<evidence type="ECO:0000250" key="1"/>
<evidence type="ECO:0000250" key="2">
    <source>
        <dbReference type="UniProtKB" id="O22446"/>
    </source>
</evidence>
<evidence type="ECO:0000250" key="3">
    <source>
        <dbReference type="UniProtKB" id="Q8GXJ1"/>
    </source>
</evidence>
<evidence type="ECO:0000256" key="4">
    <source>
        <dbReference type="SAM" id="MobiDB-lite"/>
    </source>
</evidence>
<evidence type="ECO:0000269" key="5">
    <source>
    </source>
</evidence>
<evidence type="ECO:0000269" key="6">
    <source>
    </source>
</evidence>
<evidence type="ECO:0000303" key="7">
    <source>
    </source>
</evidence>
<evidence type="ECO:0000305" key="8"/>
<evidence type="ECO:0000312" key="9">
    <source>
        <dbReference type="Araport" id="AT3G44680"/>
    </source>
</evidence>
<evidence type="ECO:0000312" key="10">
    <source>
        <dbReference type="EMBL" id="CAB72470.1"/>
    </source>
</evidence>
<keyword id="KW-0156">Chromatin regulator</keyword>
<keyword id="KW-0963">Cytoplasm</keyword>
<keyword id="KW-0378">Hydrolase</keyword>
<keyword id="KW-0479">Metal-binding</keyword>
<keyword id="KW-0539">Nucleus</keyword>
<keyword id="KW-1185">Reference proteome</keyword>
<keyword id="KW-0678">Repressor</keyword>
<keyword id="KW-0804">Transcription</keyword>
<keyword id="KW-0805">Transcription regulation</keyword>
<keyword id="KW-0862">Zinc</keyword>
<accession>Q8H0W2</accession>
<accession>Q9M1N6</accession>
<proteinExistence type="evidence at protein level"/>
<feature type="chain" id="PRO_0000280088" description="Histone deacetylase 9">
    <location>
        <begin position="1"/>
        <end position="426"/>
    </location>
</feature>
<feature type="region of interest" description="Histone deacetylase">
    <location>
        <begin position="6"/>
        <end position="318"/>
    </location>
</feature>
<feature type="region of interest" description="Disordered" evidence="4">
    <location>
        <begin position="383"/>
        <end position="426"/>
    </location>
</feature>
<feature type="compositionally biased region" description="Basic and acidic residues" evidence="4">
    <location>
        <begin position="397"/>
        <end position="414"/>
    </location>
</feature>
<feature type="compositionally biased region" description="Acidic residues" evidence="4">
    <location>
        <begin position="415"/>
        <end position="426"/>
    </location>
</feature>
<feature type="active site" description="Proton donor/acceptor" evidence="3">
    <location>
        <position position="137"/>
    </location>
</feature>
<feature type="binding site" evidence="3">
    <location>
        <position position="172"/>
    </location>
    <ligand>
        <name>Zn(2+)</name>
        <dbReference type="ChEBI" id="CHEBI:29105"/>
    </ligand>
</feature>
<feature type="binding site" evidence="3">
    <location>
        <position position="174"/>
    </location>
    <ligand>
        <name>Zn(2+)</name>
        <dbReference type="ChEBI" id="CHEBI:29105"/>
    </ligand>
</feature>
<feature type="binding site" evidence="3">
    <location>
        <position position="261"/>
    </location>
    <ligand>
        <name>Zn(2+)</name>
        <dbReference type="ChEBI" id="CHEBI:29105"/>
    </ligand>
</feature>
<feature type="site" description="Polarizes the scissile carbonyl of the substrate" evidence="3">
    <location>
        <position position="300"/>
    </location>
</feature>
<comment type="function">
    <text evidence="2">Responsible for the deacetylation of lysine residues on the N-terminal part of the core histones (H2A, H2B, H3 and H4). Histone deacetylation gives a tag for epigenetic repression and plays an important role in transcriptional regulation, cell cycle progression and developmental events. Histone deacetylases act via the formation of large multiprotein complexes.</text>
</comment>
<comment type="catalytic activity">
    <reaction>
        <text>N(6)-acetyl-L-lysyl-[histone] + H2O = L-lysyl-[histone] + acetate</text>
        <dbReference type="Rhea" id="RHEA:58196"/>
        <dbReference type="Rhea" id="RHEA-COMP:9845"/>
        <dbReference type="Rhea" id="RHEA-COMP:11338"/>
        <dbReference type="ChEBI" id="CHEBI:15377"/>
        <dbReference type="ChEBI" id="CHEBI:29969"/>
        <dbReference type="ChEBI" id="CHEBI:30089"/>
        <dbReference type="ChEBI" id="CHEBI:61930"/>
        <dbReference type="EC" id="3.5.1.98"/>
    </reaction>
</comment>
<comment type="cofactor">
    <cofactor evidence="3">
        <name>Zn(2+)</name>
        <dbReference type="ChEBI" id="CHEBI:29105"/>
    </cofactor>
    <text evidence="3">Binds 1 zinc ion per subunit.</text>
</comment>
<comment type="subunit">
    <text evidence="5 6">Interacts with AHL22 (PubMed:22442143). Binds to farnesylated ASG2 in the cytosol (PubMed:28663238).</text>
</comment>
<comment type="subcellular location">
    <subcellularLocation>
        <location evidence="1">Nucleus</location>
    </subcellularLocation>
    <subcellularLocation>
        <location evidence="6">Cytoplasm</location>
        <location evidence="6">Cytosol</location>
    </subcellularLocation>
    <text evidence="6">Localized to the cytosol when in complex with farnesylated ASG2.</text>
</comment>
<comment type="similarity">
    <text evidence="8">Belongs to the histone deacetylase family. HD type 1 subfamily.</text>
</comment>
<comment type="sequence caution" evidence="8">
    <conflict type="erroneous gene model prediction">
        <sequence resource="EMBL-CDS" id="CAB72470"/>
    </conflict>
</comment>
<name>HDA9_ARATH</name>
<gene>
    <name type="primary">HDA9</name>
    <name evidence="7" type="synonym">HDAC9</name>
    <name evidence="9" type="ordered locus">At3g44680</name>
    <name evidence="10" type="ORF">T18B22.80</name>
</gene>
<sequence>MRSKDKISYFYDGDVGSVYFGPNHPMKPHRLCMTHHLILAYGLHSKMEVYRPHKAYPIEMAQFHSPDYVEFLQRINPENQNLFPNEMARYNLGEDCPVFEDLFEFCQLYAGGTIDAARRLNNKLCDIAINWAGGLHHAKKCDASGFCYINDLVLGILELLKHHPRVLYIDIDVHHGDGVEEAFYFTDRVMTVSFHKFGDKFFPGTGDVKEIGEREGKFYAINVPLKDGIDDSSFNRLFRTIISKVVEIYQPGAIVLQCGADSLARDRLGCFNLSIDGHAECVKFVKKFNLPLLVTGGGGYTKENVARCWTVETGILLDTELPNEIPENDYIKYFAPDFSLKIPGGHIENLNTKSYISSIKVQILENLRYIQHAPSVQMQEVPPDFYIPDFDEDEQNPDVRADQRSRDKQIQRDDEYFDGDNDNDAS</sequence>
<organism>
    <name type="scientific">Arabidopsis thaliana</name>
    <name type="common">Mouse-ear cress</name>
    <dbReference type="NCBI Taxonomy" id="3702"/>
    <lineage>
        <taxon>Eukaryota</taxon>
        <taxon>Viridiplantae</taxon>
        <taxon>Streptophyta</taxon>
        <taxon>Embryophyta</taxon>
        <taxon>Tracheophyta</taxon>
        <taxon>Spermatophyta</taxon>
        <taxon>Magnoliopsida</taxon>
        <taxon>eudicotyledons</taxon>
        <taxon>Gunneridae</taxon>
        <taxon>Pentapetalae</taxon>
        <taxon>rosids</taxon>
        <taxon>malvids</taxon>
        <taxon>Brassicales</taxon>
        <taxon>Brassicaceae</taxon>
        <taxon>Camelineae</taxon>
        <taxon>Arabidopsis</taxon>
    </lineage>
</organism>